<feature type="chain" id="PRO_0000375391" description="YcgL domain-containing protein Tgr7_3126">
    <location>
        <begin position="1"/>
        <end position="81"/>
    </location>
</feature>
<feature type="domain" description="YcgL" evidence="1">
    <location>
        <begin position="1"/>
        <end position="81"/>
    </location>
</feature>
<name>Y3126_THISH</name>
<proteinExistence type="inferred from homology"/>
<keyword id="KW-1185">Reference proteome</keyword>
<gene>
    <name type="ordered locus">Tgr7_3126</name>
</gene>
<protein>
    <recommendedName>
        <fullName evidence="1">YcgL domain-containing protein Tgr7_3126</fullName>
    </recommendedName>
</protein>
<sequence>MQVYVYKSRRKPDTYIYLARKDDFEVIPAPLKQVFGTPEFTLEFELTPERTLAQEDPESVLASLRERGFHLQMPPQNERPL</sequence>
<organism>
    <name type="scientific">Thioalkalivibrio sulfidiphilus (strain HL-EbGR7)</name>
    <dbReference type="NCBI Taxonomy" id="396588"/>
    <lineage>
        <taxon>Bacteria</taxon>
        <taxon>Pseudomonadati</taxon>
        <taxon>Pseudomonadota</taxon>
        <taxon>Gammaproteobacteria</taxon>
        <taxon>Chromatiales</taxon>
        <taxon>Ectothiorhodospiraceae</taxon>
        <taxon>Thioalkalivibrio</taxon>
    </lineage>
</organism>
<reference key="1">
    <citation type="journal article" date="2011" name="Stand. Genomic Sci.">
        <title>Complete genome sequence of 'Thioalkalivibrio sulfidophilus' HL-EbGr7.</title>
        <authorList>
            <person name="Muyzer G."/>
            <person name="Sorokin D.Y."/>
            <person name="Mavromatis K."/>
            <person name="Lapidus A."/>
            <person name="Clum A."/>
            <person name="Ivanova N."/>
            <person name="Pati A."/>
            <person name="d'Haeseleer P."/>
            <person name="Woyke T."/>
            <person name="Kyrpides N.C."/>
        </authorList>
    </citation>
    <scope>NUCLEOTIDE SEQUENCE [LARGE SCALE GENOMIC DNA]</scope>
    <source>
        <strain>HL-EbGR7</strain>
    </source>
</reference>
<evidence type="ECO:0000255" key="1">
    <source>
        <dbReference type="HAMAP-Rule" id="MF_01866"/>
    </source>
</evidence>
<accession>B8GQ48</accession>
<dbReference type="EMBL" id="CP001339">
    <property type="protein sequence ID" value="ACL74195.1"/>
    <property type="molecule type" value="Genomic_DNA"/>
</dbReference>
<dbReference type="RefSeq" id="WP_012639657.1">
    <property type="nucleotide sequence ID" value="NC_011901.1"/>
</dbReference>
<dbReference type="SMR" id="B8GQ48"/>
<dbReference type="STRING" id="396588.Tgr7_3126"/>
<dbReference type="KEGG" id="tgr:Tgr7_3126"/>
<dbReference type="eggNOG" id="COG3100">
    <property type="taxonomic scope" value="Bacteria"/>
</dbReference>
<dbReference type="HOGENOM" id="CLU_155118_0_0_6"/>
<dbReference type="OrthoDB" id="7062382at2"/>
<dbReference type="Proteomes" id="UP000002383">
    <property type="component" value="Chromosome"/>
</dbReference>
<dbReference type="Gene3D" id="3.10.510.20">
    <property type="entry name" value="YcgL domain"/>
    <property type="match status" value="1"/>
</dbReference>
<dbReference type="HAMAP" id="MF_01866">
    <property type="entry name" value="UPF0745"/>
    <property type="match status" value="1"/>
</dbReference>
<dbReference type="InterPro" id="IPR038068">
    <property type="entry name" value="YcgL-like_sf"/>
</dbReference>
<dbReference type="InterPro" id="IPR027354">
    <property type="entry name" value="YcgL_dom"/>
</dbReference>
<dbReference type="PANTHER" id="PTHR38109">
    <property type="entry name" value="PROTEIN YCGL"/>
    <property type="match status" value="1"/>
</dbReference>
<dbReference type="PANTHER" id="PTHR38109:SF1">
    <property type="entry name" value="PROTEIN YCGL"/>
    <property type="match status" value="1"/>
</dbReference>
<dbReference type="Pfam" id="PF05166">
    <property type="entry name" value="YcgL"/>
    <property type="match status" value="1"/>
</dbReference>
<dbReference type="SUPFAM" id="SSF160191">
    <property type="entry name" value="YcgL-like"/>
    <property type="match status" value="1"/>
</dbReference>
<dbReference type="PROSITE" id="PS51648">
    <property type="entry name" value="YCGL"/>
    <property type="match status" value="1"/>
</dbReference>